<name>CYB_CERNT</name>
<dbReference type="EMBL" id="L15083">
    <property type="protein sequence ID" value="AAD22275.1"/>
    <property type="molecule type" value="Genomic_DNA"/>
</dbReference>
<dbReference type="EMBL" id="AF129418">
    <property type="protein sequence ID" value="AAD31814.1"/>
    <property type="molecule type" value="Genomic_DNA"/>
</dbReference>
<dbReference type="SMR" id="P82045"/>
<dbReference type="GO" id="GO:0005743">
    <property type="term" value="C:mitochondrial inner membrane"/>
    <property type="evidence" value="ECO:0007669"/>
    <property type="project" value="UniProtKB-SubCell"/>
</dbReference>
<dbReference type="GO" id="GO:0046872">
    <property type="term" value="F:metal ion binding"/>
    <property type="evidence" value="ECO:0007669"/>
    <property type="project" value="UniProtKB-KW"/>
</dbReference>
<dbReference type="GO" id="GO:0008121">
    <property type="term" value="F:ubiquinol-cytochrome-c reductase activity"/>
    <property type="evidence" value="ECO:0007669"/>
    <property type="project" value="TreeGrafter"/>
</dbReference>
<dbReference type="GO" id="GO:0006122">
    <property type="term" value="P:mitochondrial electron transport, ubiquinol to cytochrome c"/>
    <property type="evidence" value="ECO:0007669"/>
    <property type="project" value="TreeGrafter"/>
</dbReference>
<dbReference type="CDD" id="cd00290">
    <property type="entry name" value="cytochrome_b_C"/>
    <property type="match status" value="1"/>
</dbReference>
<dbReference type="Gene3D" id="1.20.810.10">
    <property type="entry name" value="Cytochrome Bc1 Complex, Chain C"/>
    <property type="match status" value="1"/>
</dbReference>
<dbReference type="InterPro" id="IPR005798">
    <property type="entry name" value="Cyt_b/b6_C"/>
</dbReference>
<dbReference type="InterPro" id="IPR036150">
    <property type="entry name" value="Cyt_b/b6_C_sf"/>
</dbReference>
<dbReference type="InterPro" id="IPR027387">
    <property type="entry name" value="Cytb/b6-like_sf"/>
</dbReference>
<dbReference type="InterPro" id="IPR048260">
    <property type="entry name" value="Cytochrome_b_C_euk/bac"/>
</dbReference>
<dbReference type="PANTHER" id="PTHR19271">
    <property type="entry name" value="CYTOCHROME B"/>
    <property type="match status" value="1"/>
</dbReference>
<dbReference type="PANTHER" id="PTHR19271:SF16">
    <property type="entry name" value="CYTOCHROME B"/>
    <property type="match status" value="1"/>
</dbReference>
<dbReference type="Pfam" id="PF00032">
    <property type="entry name" value="Cytochrom_B_C"/>
    <property type="match status" value="1"/>
</dbReference>
<dbReference type="SUPFAM" id="SSF81648">
    <property type="entry name" value="a domain/subunit of cytochrome bc1 complex (Ubiquinol-cytochrome c reductase)"/>
    <property type="match status" value="1"/>
</dbReference>
<dbReference type="PROSITE" id="PS51003">
    <property type="entry name" value="CYTB_CTER"/>
    <property type="match status" value="1"/>
</dbReference>
<evidence type="ECO:0000250" key="1"/>
<evidence type="ECO:0000250" key="2">
    <source>
        <dbReference type="UniProtKB" id="P00157"/>
    </source>
</evidence>
<evidence type="ECO:0000255" key="3">
    <source>
        <dbReference type="PROSITE-ProRule" id="PRU00967"/>
    </source>
</evidence>
<accession>P82045</accession>
<keyword id="KW-0249">Electron transport</keyword>
<keyword id="KW-0349">Heme</keyword>
<keyword id="KW-0408">Iron</keyword>
<keyword id="KW-0472">Membrane</keyword>
<keyword id="KW-0479">Metal-binding</keyword>
<keyword id="KW-0496">Mitochondrion</keyword>
<keyword id="KW-0999">Mitochondrion inner membrane</keyword>
<keyword id="KW-0679">Respiratory chain</keyword>
<keyword id="KW-0812">Transmembrane</keyword>
<keyword id="KW-1133">Transmembrane helix</keyword>
<keyword id="KW-0813">Transport</keyword>
<keyword id="KW-0830">Ubiquinone</keyword>
<gene>
    <name type="primary">MT-CYB</name>
    <name type="synonym">COB</name>
    <name type="synonym">CYTB</name>
    <name type="synonym">MTCYB</name>
</gene>
<organism>
    <name type="scientific">Cervus nippon taiouanus</name>
    <name type="common">Formosan sika deer</name>
    <dbReference type="NCBI Taxonomy" id="37550"/>
    <lineage>
        <taxon>Eukaryota</taxon>
        <taxon>Metazoa</taxon>
        <taxon>Chordata</taxon>
        <taxon>Craniata</taxon>
        <taxon>Vertebrata</taxon>
        <taxon>Euteleostomi</taxon>
        <taxon>Mammalia</taxon>
        <taxon>Eutheria</taxon>
        <taxon>Laurasiatheria</taxon>
        <taxon>Artiodactyla</taxon>
        <taxon>Ruminantia</taxon>
        <taxon>Pecora</taxon>
        <taxon>Cervidae</taxon>
        <taxon>Cervinae</taxon>
        <taxon>Cervus</taxon>
    </lineage>
</organism>
<feature type="chain" id="PRO_0000060765" description="Cytochrome b">
    <location>
        <begin position="1" status="less than"/>
        <end position="153"/>
    </location>
</feature>
<feature type="transmembrane region" description="Helical" evidence="2">
    <location>
        <begin position="1" status="less than"/>
        <end position="20"/>
    </location>
</feature>
<feature type="transmembrane region" description="Helical" evidence="2">
    <location>
        <begin position="62"/>
        <end position="82"/>
    </location>
</feature>
<feature type="transmembrane region" description="Helical" evidence="2">
    <location>
        <begin position="94"/>
        <end position="114"/>
    </location>
</feature>
<feature type="transmembrane region" description="Helical" evidence="2">
    <location>
        <begin position="121"/>
        <end position="141"/>
    </location>
</feature>
<feature type="sequence variant" description="In haplotype CNT1.">
    <original>M</original>
    <variation>V</variation>
    <location>
        <position position="10"/>
    </location>
</feature>
<feature type="sequence variant" description="In haplotype CNT1.">
    <original>S</original>
    <variation>N</variation>
    <location>
        <position position="37"/>
    </location>
</feature>
<feature type="non-terminal residue">
    <location>
        <position position="1"/>
    </location>
</feature>
<protein>
    <recommendedName>
        <fullName>Cytochrome b</fullName>
    </recommendedName>
    <alternativeName>
        <fullName>Complex III subunit 3</fullName>
    </alternativeName>
    <alternativeName>
        <fullName>Complex III subunit III</fullName>
    </alternativeName>
    <alternativeName>
        <fullName>Cytochrome b-c1 complex subunit 3</fullName>
    </alternativeName>
    <alternativeName>
        <fullName>Ubiquinol-cytochrome-c reductase complex cytochrome b subunit</fullName>
    </alternativeName>
</protein>
<reference key="1">
    <citation type="journal article" date="1999" name="Mol. Phylogenet. Evol.">
        <title>A mitochondrial control region and cytochrome b phylogeny of sika deer (Cervus nippon) and report of tandem repeats in the control region.</title>
        <authorList>
            <person name="Cook C.E."/>
            <person name="Wang Y."/>
            <person name="Sensabaugh G."/>
        </authorList>
    </citation>
    <scope>NUCLEOTIDE SEQUENCE [GENOMIC DNA]</scope>
    <scope>VARIANTS</scope>
    <source>
        <tissue>Blood</tissue>
    </source>
</reference>
<sequence>KDILGILLLMLFLMLLVLFAPDLLGDPDNYTPANPLSTPPHIKPEWYFLFAYAILRSIPNKLGGVLALVSSILILILMPFLHTSKQRSMMFRPFSQCLFWILVADLLTLTWIGGQPVEYPFIIIGQLASILYFFIILVLMPITSTIENNLLKW</sequence>
<geneLocation type="mitochondrion"/>
<proteinExistence type="inferred from homology"/>
<comment type="function">
    <text evidence="2">Component of the ubiquinol-cytochrome c reductase complex (complex III or cytochrome b-c1 complex) that is part of the mitochondrial respiratory chain. The b-c1 complex mediates electron transfer from ubiquinol to cytochrome c. Contributes to the generation of a proton gradient across the mitochondrial membrane that is then used for ATP synthesis.</text>
</comment>
<comment type="cofactor">
    <cofactor evidence="2">
        <name>heme</name>
        <dbReference type="ChEBI" id="CHEBI:30413"/>
    </cofactor>
    <text evidence="2">Binds 2 heme groups non-covalently.</text>
</comment>
<comment type="subunit">
    <text evidence="2">The cytochrome bc1 complex contains 11 subunits: 3 respiratory subunits (MT-CYB, CYC1 and UQCRFS1), 2 core proteins (UQCRC1 and UQCRC2) and 6 low-molecular weight proteins (UQCRH/QCR6, UQCRB/QCR7, UQCRQ/QCR8, UQCR10/QCR9, UQCR11/QCR10 and a cleavage product of UQCRFS1). This cytochrome bc1 complex then forms a dimer.</text>
</comment>
<comment type="subcellular location">
    <subcellularLocation>
        <location evidence="2">Mitochondrion inner membrane</location>
        <topology evidence="2">Multi-pass membrane protein</topology>
    </subcellularLocation>
</comment>
<comment type="miscellaneous">
    <text evidence="1">Heme 1 (or BL or b562) is low-potential and absorbs at about 562 nm, and heme 2 (or BH or b566) is high-potential and absorbs at about 566 nm.</text>
</comment>
<comment type="similarity">
    <text evidence="3">Belongs to the cytochrome b family.</text>
</comment>
<comment type="caution">
    <text evidence="2">The full-length protein contains only eight transmembrane helices, not nine as predicted by bioinformatics tools.</text>
</comment>